<reference key="1">
    <citation type="journal article" date="1986" name="Virology">
        <title>Nucleotide sequence and genetic map of the 16-kb vaccinia virus HindIII D fragment.</title>
        <authorList>
            <person name="Niles E.G."/>
            <person name="Condit R.C."/>
            <person name="Caro P."/>
            <person name="Davidson K."/>
            <person name="Matusick L."/>
            <person name="Seto J."/>
        </authorList>
    </citation>
    <scope>NUCLEOTIDE SEQUENCE [GENOMIC DNA]</scope>
</reference>
<protein>
    <recommendedName>
        <fullName>Uncharacterized 9.2 kDa protein</fullName>
    </recommendedName>
</protein>
<gene>
    <name type="ORF">D ORF A</name>
</gene>
<organismHost>
    <name type="scientific">Bos taurus</name>
    <name type="common">Bovine</name>
    <dbReference type="NCBI Taxonomy" id="9913"/>
</organismHost>
<dbReference type="EMBL" id="M15058">
    <property type="protein sequence ID" value="AAA48254.1"/>
    <property type="molecule type" value="Genomic_DNA"/>
</dbReference>
<dbReference type="PIR" id="A03873">
    <property type="entry name" value="QQVZ2"/>
</dbReference>
<dbReference type="IntAct" id="P04299">
    <property type="interactions" value="1"/>
</dbReference>
<dbReference type="MINT" id="P04299"/>
<accession>P04299</accession>
<sequence>MAPLFSSKKFLVDGLSSIVDAPLINFLLRSIIVAKSTLSTRTNPYSLNTLTISFFLIMYSVIGVDIVDGLYTTILSSAIFSTDI</sequence>
<feature type="chain" id="PRO_0000099685" description="Uncharacterized 9.2 kDa protein">
    <location>
        <begin position="1"/>
        <end position="84"/>
    </location>
</feature>
<organism>
    <name type="scientific">Vaccinia virus (strain Western Reserve)</name>
    <name type="common">VACV</name>
    <name type="synonym">Vaccinia virus (strain WR)</name>
    <dbReference type="NCBI Taxonomy" id="10254"/>
    <lineage>
        <taxon>Viruses</taxon>
        <taxon>Varidnaviria</taxon>
        <taxon>Bamfordvirae</taxon>
        <taxon>Nucleocytoviricota</taxon>
        <taxon>Pokkesviricetes</taxon>
        <taxon>Chitovirales</taxon>
        <taxon>Poxviridae</taxon>
        <taxon>Chordopoxvirinae</taxon>
        <taxon>Orthopoxvirus</taxon>
        <taxon>Vaccinia virus</taxon>
    </lineage>
</organism>
<proteinExistence type="predicted"/>
<name>YVDA_VACCW</name>